<name>PURA_NOCSJ</name>
<accession>A1SPV6</accession>
<evidence type="ECO:0000255" key="1">
    <source>
        <dbReference type="HAMAP-Rule" id="MF_00011"/>
    </source>
</evidence>
<keyword id="KW-0963">Cytoplasm</keyword>
<keyword id="KW-0342">GTP-binding</keyword>
<keyword id="KW-0436">Ligase</keyword>
<keyword id="KW-0460">Magnesium</keyword>
<keyword id="KW-0479">Metal-binding</keyword>
<keyword id="KW-0547">Nucleotide-binding</keyword>
<keyword id="KW-0658">Purine biosynthesis</keyword>
<keyword id="KW-1185">Reference proteome</keyword>
<protein>
    <recommendedName>
        <fullName evidence="1">Adenylosuccinate synthetase</fullName>
        <shortName evidence="1">AMPSase</shortName>
        <shortName evidence="1">AdSS</shortName>
        <ecNumber evidence="1">6.3.4.4</ecNumber>
    </recommendedName>
    <alternativeName>
        <fullName evidence="1">IMP--aspartate ligase</fullName>
    </alternativeName>
</protein>
<feature type="chain" id="PRO_1000000879" description="Adenylosuccinate synthetase">
    <location>
        <begin position="1"/>
        <end position="432"/>
    </location>
</feature>
<feature type="active site" description="Proton acceptor" evidence="1">
    <location>
        <position position="13"/>
    </location>
</feature>
<feature type="active site" description="Proton donor" evidence="1">
    <location>
        <position position="41"/>
    </location>
</feature>
<feature type="binding site" evidence="1">
    <location>
        <begin position="12"/>
        <end position="18"/>
    </location>
    <ligand>
        <name>GTP</name>
        <dbReference type="ChEBI" id="CHEBI:37565"/>
    </ligand>
</feature>
<feature type="binding site" description="in other chain" evidence="1">
    <location>
        <begin position="13"/>
        <end position="16"/>
    </location>
    <ligand>
        <name>IMP</name>
        <dbReference type="ChEBI" id="CHEBI:58053"/>
        <note>ligand shared between dimeric partners</note>
    </ligand>
</feature>
<feature type="binding site" evidence="1">
    <location>
        <position position="13"/>
    </location>
    <ligand>
        <name>Mg(2+)</name>
        <dbReference type="ChEBI" id="CHEBI:18420"/>
    </ligand>
</feature>
<feature type="binding site" description="in other chain" evidence="1">
    <location>
        <begin position="38"/>
        <end position="41"/>
    </location>
    <ligand>
        <name>IMP</name>
        <dbReference type="ChEBI" id="CHEBI:58053"/>
        <note>ligand shared between dimeric partners</note>
    </ligand>
</feature>
<feature type="binding site" evidence="1">
    <location>
        <begin position="40"/>
        <end position="42"/>
    </location>
    <ligand>
        <name>GTP</name>
        <dbReference type="ChEBI" id="CHEBI:37565"/>
    </ligand>
</feature>
<feature type="binding site" evidence="1">
    <location>
        <position position="40"/>
    </location>
    <ligand>
        <name>Mg(2+)</name>
        <dbReference type="ChEBI" id="CHEBI:18420"/>
    </ligand>
</feature>
<feature type="binding site" description="in other chain" evidence="1">
    <location>
        <position position="133"/>
    </location>
    <ligand>
        <name>IMP</name>
        <dbReference type="ChEBI" id="CHEBI:58053"/>
        <note>ligand shared between dimeric partners</note>
    </ligand>
</feature>
<feature type="binding site" evidence="1">
    <location>
        <position position="147"/>
    </location>
    <ligand>
        <name>IMP</name>
        <dbReference type="ChEBI" id="CHEBI:58053"/>
        <note>ligand shared between dimeric partners</note>
    </ligand>
</feature>
<feature type="binding site" description="in other chain" evidence="1">
    <location>
        <position position="228"/>
    </location>
    <ligand>
        <name>IMP</name>
        <dbReference type="ChEBI" id="CHEBI:58053"/>
        <note>ligand shared between dimeric partners</note>
    </ligand>
</feature>
<feature type="binding site" description="in other chain" evidence="1">
    <location>
        <position position="243"/>
    </location>
    <ligand>
        <name>IMP</name>
        <dbReference type="ChEBI" id="CHEBI:58053"/>
        <note>ligand shared between dimeric partners</note>
    </ligand>
</feature>
<feature type="binding site" evidence="1">
    <location>
        <begin position="303"/>
        <end position="309"/>
    </location>
    <ligand>
        <name>substrate</name>
    </ligand>
</feature>
<feature type="binding site" description="in other chain" evidence="1">
    <location>
        <position position="307"/>
    </location>
    <ligand>
        <name>IMP</name>
        <dbReference type="ChEBI" id="CHEBI:58053"/>
        <note>ligand shared between dimeric partners</note>
    </ligand>
</feature>
<feature type="binding site" evidence="1">
    <location>
        <position position="309"/>
    </location>
    <ligand>
        <name>GTP</name>
        <dbReference type="ChEBI" id="CHEBI:37565"/>
    </ligand>
</feature>
<feature type="binding site" evidence="1">
    <location>
        <begin position="335"/>
        <end position="337"/>
    </location>
    <ligand>
        <name>GTP</name>
        <dbReference type="ChEBI" id="CHEBI:37565"/>
    </ligand>
</feature>
<feature type="binding site" evidence="1">
    <location>
        <begin position="417"/>
        <end position="419"/>
    </location>
    <ligand>
        <name>GTP</name>
        <dbReference type="ChEBI" id="CHEBI:37565"/>
    </ligand>
</feature>
<dbReference type="EC" id="6.3.4.4" evidence="1"/>
<dbReference type="EMBL" id="CP000509">
    <property type="protein sequence ID" value="ABL83841.1"/>
    <property type="molecule type" value="Genomic_DNA"/>
</dbReference>
<dbReference type="RefSeq" id="WP_011757770.1">
    <property type="nucleotide sequence ID" value="NC_008699.1"/>
</dbReference>
<dbReference type="SMR" id="A1SPV6"/>
<dbReference type="STRING" id="196162.Noca_4344"/>
<dbReference type="KEGG" id="nca:Noca_4344"/>
<dbReference type="eggNOG" id="COG0104">
    <property type="taxonomic scope" value="Bacteria"/>
</dbReference>
<dbReference type="HOGENOM" id="CLU_029848_0_0_11"/>
<dbReference type="OrthoDB" id="9807553at2"/>
<dbReference type="UniPathway" id="UPA00075">
    <property type="reaction ID" value="UER00335"/>
</dbReference>
<dbReference type="Proteomes" id="UP000000640">
    <property type="component" value="Chromosome"/>
</dbReference>
<dbReference type="GO" id="GO:0005737">
    <property type="term" value="C:cytoplasm"/>
    <property type="evidence" value="ECO:0007669"/>
    <property type="project" value="UniProtKB-SubCell"/>
</dbReference>
<dbReference type="GO" id="GO:0004019">
    <property type="term" value="F:adenylosuccinate synthase activity"/>
    <property type="evidence" value="ECO:0007669"/>
    <property type="project" value="UniProtKB-UniRule"/>
</dbReference>
<dbReference type="GO" id="GO:0005525">
    <property type="term" value="F:GTP binding"/>
    <property type="evidence" value="ECO:0007669"/>
    <property type="project" value="UniProtKB-UniRule"/>
</dbReference>
<dbReference type="GO" id="GO:0000287">
    <property type="term" value="F:magnesium ion binding"/>
    <property type="evidence" value="ECO:0007669"/>
    <property type="project" value="UniProtKB-UniRule"/>
</dbReference>
<dbReference type="GO" id="GO:0044208">
    <property type="term" value="P:'de novo' AMP biosynthetic process"/>
    <property type="evidence" value="ECO:0007669"/>
    <property type="project" value="UniProtKB-UniRule"/>
</dbReference>
<dbReference type="GO" id="GO:0046040">
    <property type="term" value="P:IMP metabolic process"/>
    <property type="evidence" value="ECO:0007669"/>
    <property type="project" value="TreeGrafter"/>
</dbReference>
<dbReference type="CDD" id="cd03108">
    <property type="entry name" value="AdSS"/>
    <property type="match status" value="1"/>
</dbReference>
<dbReference type="FunFam" id="1.10.300.10:FF:000001">
    <property type="entry name" value="Adenylosuccinate synthetase"/>
    <property type="match status" value="1"/>
</dbReference>
<dbReference type="FunFam" id="3.90.170.10:FF:000001">
    <property type="entry name" value="Adenylosuccinate synthetase"/>
    <property type="match status" value="1"/>
</dbReference>
<dbReference type="Gene3D" id="3.40.440.10">
    <property type="entry name" value="Adenylosuccinate Synthetase, subunit A, domain 1"/>
    <property type="match status" value="1"/>
</dbReference>
<dbReference type="Gene3D" id="1.10.300.10">
    <property type="entry name" value="Adenylosuccinate Synthetase, subunit A, domain 2"/>
    <property type="match status" value="1"/>
</dbReference>
<dbReference type="Gene3D" id="3.90.170.10">
    <property type="entry name" value="Adenylosuccinate Synthetase, subunit A, domain 3"/>
    <property type="match status" value="1"/>
</dbReference>
<dbReference type="HAMAP" id="MF_00011">
    <property type="entry name" value="Adenylosucc_synth"/>
    <property type="match status" value="1"/>
</dbReference>
<dbReference type="InterPro" id="IPR018220">
    <property type="entry name" value="Adenylosuccin_syn_GTP-bd"/>
</dbReference>
<dbReference type="InterPro" id="IPR033128">
    <property type="entry name" value="Adenylosuccin_syn_Lys_AS"/>
</dbReference>
<dbReference type="InterPro" id="IPR042109">
    <property type="entry name" value="Adenylosuccinate_synth_dom1"/>
</dbReference>
<dbReference type="InterPro" id="IPR042110">
    <property type="entry name" value="Adenylosuccinate_synth_dom2"/>
</dbReference>
<dbReference type="InterPro" id="IPR042111">
    <property type="entry name" value="Adenylosuccinate_synth_dom3"/>
</dbReference>
<dbReference type="InterPro" id="IPR001114">
    <property type="entry name" value="Adenylosuccinate_synthetase"/>
</dbReference>
<dbReference type="InterPro" id="IPR027417">
    <property type="entry name" value="P-loop_NTPase"/>
</dbReference>
<dbReference type="NCBIfam" id="NF002223">
    <property type="entry name" value="PRK01117.1"/>
    <property type="match status" value="1"/>
</dbReference>
<dbReference type="NCBIfam" id="TIGR00184">
    <property type="entry name" value="purA"/>
    <property type="match status" value="1"/>
</dbReference>
<dbReference type="PANTHER" id="PTHR11846">
    <property type="entry name" value="ADENYLOSUCCINATE SYNTHETASE"/>
    <property type="match status" value="1"/>
</dbReference>
<dbReference type="PANTHER" id="PTHR11846:SF0">
    <property type="entry name" value="ADENYLOSUCCINATE SYNTHETASE"/>
    <property type="match status" value="1"/>
</dbReference>
<dbReference type="Pfam" id="PF00709">
    <property type="entry name" value="Adenylsucc_synt"/>
    <property type="match status" value="1"/>
</dbReference>
<dbReference type="SMART" id="SM00788">
    <property type="entry name" value="Adenylsucc_synt"/>
    <property type="match status" value="1"/>
</dbReference>
<dbReference type="SUPFAM" id="SSF52540">
    <property type="entry name" value="P-loop containing nucleoside triphosphate hydrolases"/>
    <property type="match status" value="1"/>
</dbReference>
<dbReference type="PROSITE" id="PS01266">
    <property type="entry name" value="ADENYLOSUCCIN_SYN_1"/>
    <property type="match status" value="1"/>
</dbReference>
<dbReference type="PROSITE" id="PS00513">
    <property type="entry name" value="ADENYLOSUCCIN_SYN_2"/>
    <property type="match status" value="1"/>
</dbReference>
<proteinExistence type="inferred from homology"/>
<reference key="1">
    <citation type="submission" date="2006-12" db="EMBL/GenBank/DDBJ databases">
        <title>Complete sequence of chromosome 1 of Nocardioides sp. JS614.</title>
        <authorList>
            <person name="Copeland A."/>
            <person name="Lucas S."/>
            <person name="Lapidus A."/>
            <person name="Barry K."/>
            <person name="Detter J.C."/>
            <person name="Glavina del Rio T."/>
            <person name="Hammon N."/>
            <person name="Israni S."/>
            <person name="Dalin E."/>
            <person name="Tice H."/>
            <person name="Pitluck S."/>
            <person name="Thompson L.S."/>
            <person name="Brettin T."/>
            <person name="Bruce D."/>
            <person name="Han C."/>
            <person name="Tapia R."/>
            <person name="Schmutz J."/>
            <person name="Larimer F."/>
            <person name="Land M."/>
            <person name="Hauser L."/>
            <person name="Kyrpides N."/>
            <person name="Kim E."/>
            <person name="Mattes T."/>
            <person name="Gossett J."/>
            <person name="Richardson P."/>
        </authorList>
    </citation>
    <scope>NUCLEOTIDE SEQUENCE [LARGE SCALE GENOMIC DNA]</scope>
    <source>
        <strain>ATCC BAA-499 / JS614</strain>
    </source>
</reference>
<comment type="function">
    <text evidence="1">Plays an important role in the de novo pathway of purine nucleotide biosynthesis. Catalyzes the first committed step in the biosynthesis of AMP from IMP.</text>
</comment>
<comment type="catalytic activity">
    <reaction evidence="1">
        <text>IMP + L-aspartate + GTP = N(6)-(1,2-dicarboxyethyl)-AMP + GDP + phosphate + 2 H(+)</text>
        <dbReference type="Rhea" id="RHEA:15753"/>
        <dbReference type="ChEBI" id="CHEBI:15378"/>
        <dbReference type="ChEBI" id="CHEBI:29991"/>
        <dbReference type="ChEBI" id="CHEBI:37565"/>
        <dbReference type="ChEBI" id="CHEBI:43474"/>
        <dbReference type="ChEBI" id="CHEBI:57567"/>
        <dbReference type="ChEBI" id="CHEBI:58053"/>
        <dbReference type="ChEBI" id="CHEBI:58189"/>
        <dbReference type="EC" id="6.3.4.4"/>
    </reaction>
</comment>
<comment type="cofactor">
    <cofactor evidence="1">
        <name>Mg(2+)</name>
        <dbReference type="ChEBI" id="CHEBI:18420"/>
    </cofactor>
    <text evidence="1">Binds 1 Mg(2+) ion per subunit.</text>
</comment>
<comment type="pathway">
    <text evidence="1">Purine metabolism; AMP biosynthesis via de novo pathway; AMP from IMP: step 1/2.</text>
</comment>
<comment type="subunit">
    <text evidence="1">Homodimer.</text>
</comment>
<comment type="subcellular location">
    <subcellularLocation>
        <location evidence="1">Cytoplasm</location>
    </subcellularLocation>
</comment>
<comment type="similarity">
    <text evidence="1">Belongs to the adenylosuccinate synthetase family.</text>
</comment>
<sequence>MPAIAIIGAQWGDEGKGKATDLLGTSVDYVVKFNGGNNAGHTVVITDASGHTEKYALHLLPSGILTPGCTPVIGNGVVVDLAVLFEELDALEQRGVDVSRLRISANAHVIADYNRTLDKVTERFLGSRRIGTTGRGIGPTYADKMNRIGIRVQDIFDEKILTQKVEGVLDLKNQVLTKIYNRRAATVEATVEELLAFADRLRPMVCDTGLLLNQALDRGETVLLEAGQATLLDVDHGTYPFVTSSSATAGGACTGSGIPPRRLEQVIGIVKAYTTRVGEGPFPTELHDDAGEHLRKVGAEFGTTTGRPRRCGWYDAVIARYAARVNGVTDFVLTKLDVLTGLEQVPVCVAYDVGGVRHDEMPVNQTDFHHAVPIYEYLPGWWEDISGARTLADLPANAQAYVKAVEEMSGARISAVGVGPSRDATVAIHDLI</sequence>
<organism>
    <name type="scientific">Nocardioides sp. (strain ATCC BAA-499 / JS614)</name>
    <dbReference type="NCBI Taxonomy" id="196162"/>
    <lineage>
        <taxon>Bacteria</taxon>
        <taxon>Bacillati</taxon>
        <taxon>Actinomycetota</taxon>
        <taxon>Actinomycetes</taxon>
        <taxon>Propionibacteriales</taxon>
        <taxon>Nocardioidaceae</taxon>
        <taxon>Nocardioides</taxon>
    </lineage>
</organism>
<gene>
    <name evidence="1" type="primary">purA</name>
    <name type="ordered locus">Noca_4344</name>
</gene>